<name>TRMD_CHLTA</name>
<protein>
    <recommendedName>
        <fullName evidence="1">tRNA (guanine-N(1)-)-methyltransferase</fullName>
        <ecNumber evidence="1">2.1.1.228</ecNumber>
    </recommendedName>
    <alternativeName>
        <fullName evidence="1">M1G-methyltransferase</fullName>
    </alternativeName>
    <alternativeName>
        <fullName evidence="1">tRNA [GM37] methyltransferase</fullName>
    </alternativeName>
</protein>
<reference key="1">
    <citation type="journal article" date="2005" name="Infect. Immun.">
        <title>Comparative genomic analysis of Chlamydia trachomatis oculotropic and genitotropic strains.</title>
        <authorList>
            <person name="Carlson J.H."/>
            <person name="Porcella S.F."/>
            <person name="McClarty G."/>
            <person name="Caldwell H.D."/>
        </authorList>
    </citation>
    <scope>NUCLEOTIDE SEQUENCE [LARGE SCALE GENOMIC DNA]</scope>
    <source>
        <strain>ATCC VR-571B / DSM 19440 / HAR-13</strain>
    </source>
</reference>
<organism>
    <name type="scientific">Chlamydia trachomatis serovar A (strain ATCC VR-571B / DSM 19440 / HAR-13)</name>
    <dbReference type="NCBI Taxonomy" id="315277"/>
    <lineage>
        <taxon>Bacteria</taxon>
        <taxon>Pseudomonadati</taxon>
        <taxon>Chlamydiota</taxon>
        <taxon>Chlamydiia</taxon>
        <taxon>Chlamydiales</taxon>
        <taxon>Chlamydiaceae</taxon>
        <taxon>Chlamydia/Chlamydophila group</taxon>
        <taxon>Chlamydia</taxon>
    </lineage>
</organism>
<comment type="function">
    <text evidence="1">Specifically methylates guanosine-37 in various tRNAs.</text>
</comment>
<comment type="catalytic activity">
    <reaction evidence="1">
        <text>guanosine(37) in tRNA + S-adenosyl-L-methionine = N(1)-methylguanosine(37) in tRNA + S-adenosyl-L-homocysteine + H(+)</text>
        <dbReference type="Rhea" id="RHEA:36899"/>
        <dbReference type="Rhea" id="RHEA-COMP:10145"/>
        <dbReference type="Rhea" id="RHEA-COMP:10147"/>
        <dbReference type="ChEBI" id="CHEBI:15378"/>
        <dbReference type="ChEBI" id="CHEBI:57856"/>
        <dbReference type="ChEBI" id="CHEBI:59789"/>
        <dbReference type="ChEBI" id="CHEBI:73542"/>
        <dbReference type="ChEBI" id="CHEBI:74269"/>
        <dbReference type="EC" id="2.1.1.228"/>
    </reaction>
</comment>
<comment type="subunit">
    <text evidence="1">Homodimer.</text>
</comment>
<comment type="subcellular location">
    <subcellularLocation>
        <location evidence="1">Cytoplasm</location>
    </subcellularLocation>
</comment>
<comment type="similarity">
    <text evidence="1">Belongs to the RNA methyltransferase TrmD family.</text>
</comment>
<sequence length="352" mass="39766">MEIDILSLFPDYFASPLQATILGRAIKQGALSVRSRDIREFGLGKWKQVDDSPYNGEGMLLMAEPVVQAIRSIRRKKSKVIYLSPQGQLLSAKKSRELASCSHLVLLCGHYEGIDERALTAEVDEEISIGDYVLTNGCAAALVLVDALARFIPGVLGNQESAEYDSLENGLLEGPQYTRPRVFEGESVPEVLLCGDHQKIADWRKQVSLERTRERRPDLYLQYFYGNSACLSTQEDLPRIEVVSPKTFSVVLEVQDLRKAKKFYSRMFGKECWDGDKLFLLGKTSLYLQQTKETRGPTTVFIELETDHDFVRFLKRWEMLGGELGEQGTGGFPLRQVFDLDGHIWVVSCVQK</sequence>
<keyword id="KW-0963">Cytoplasm</keyword>
<keyword id="KW-0489">Methyltransferase</keyword>
<keyword id="KW-0949">S-adenosyl-L-methionine</keyword>
<keyword id="KW-0808">Transferase</keyword>
<keyword id="KW-0819">tRNA processing</keyword>
<evidence type="ECO:0000255" key="1">
    <source>
        <dbReference type="HAMAP-Rule" id="MF_00605"/>
    </source>
</evidence>
<proteinExistence type="inferred from homology"/>
<gene>
    <name evidence="1" type="primary">trmD</name>
    <name type="ordered locus">CTA_0029</name>
</gene>
<feature type="chain" id="PRO_0000257401" description="tRNA (guanine-N(1)-)-methyltransferase">
    <location>
        <begin position="1"/>
        <end position="352"/>
    </location>
</feature>
<feature type="binding site" evidence="1">
    <location>
        <position position="109"/>
    </location>
    <ligand>
        <name>S-adenosyl-L-methionine</name>
        <dbReference type="ChEBI" id="CHEBI:59789"/>
    </ligand>
</feature>
<feature type="binding site" evidence="1">
    <location>
        <begin position="129"/>
        <end position="134"/>
    </location>
    <ligand>
        <name>S-adenosyl-L-methionine</name>
        <dbReference type="ChEBI" id="CHEBI:59789"/>
    </ligand>
</feature>
<dbReference type="EC" id="2.1.1.228" evidence="1"/>
<dbReference type="EMBL" id="CP000051">
    <property type="protein sequence ID" value="AAX50277.1"/>
    <property type="molecule type" value="Genomic_DNA"/>
</dbReference>
<dbReference type="RefSeq" id="WP_009873014.1">
    <property type="nucleotide sequence ID" value="NC_007429.1"/>
</dbReference>
<dbReference type="SMR" id="Q3KMZ5"/>
<dbReference type="KEGG" id="cta:CTA_0029"/>
<dbReference type="HOGENOM" id="CLU_047363_0_2_0"/>
<dbReference type="Proteomes" id="UP000002532">
    <property type="component" value="Chromosome"/>
</dbReference>
<dbReference type="GO" id="GO:0005829">
    <property type="term" value="C:cytosol"/>
    <property type="evidence" value="ECO:0007669"/>
    <property type="project" value="TreeGrafter"/>
</dbReference>
<dbReference type="GO" id="GO:0052906">
    <property type="term" value="F:tRNA (guanine(37)-N1)-methyltransferase activity"/>
    <property type="evidence" value="ECO:0007669"/>
    <property type="project" value="UniProtKB-UniRule"/>
</dbReference>
<dbReference type="GO" id="GO:0002939">
    <property type="term" value="P:tRNA N1-guanine methylation"/>
    <property type="evidence" value="ECO:0007669"/>
    <property type="project" value="TreeGrafter"/>
</dbReference>
<dbReference type="CDD" id="cd18080">
    <property type="entry name" value="TrmD-like"/>
    <property type="match status" value="1"/>
</dbReference>
<dbReference type="CDD" id="cd06587">
    <property type="entry name" value="VOC"/>
    <property type="match status" value="1"/>
</dbReference>
<dbReference type="FunFam" id="1.10.1270.20:FF:000004">
    <property type="entry name" value="tRNA (guanine-N(1)-)-methyltransferase"/>
    <property type="match status" value="1"/>
</dbReference>
<dbReference type="FunFam" id="3.40.1280.10:FF:000001">
    <property type="entry name" value="tRNA (guanine-N(1)-)-methyltransferase"/>
    <property type="match status" value="1"/>
</dbReference>
<dbReference type="Gene3D" id="3.40.1280.10">
    <property type="match status" value="1"/>
</dbReference>
<dbReference type="Gene3D" id="3.10.180.10">
    <property type="entry name" value="2,3-Dihydroxybiphenyl 1,2-Dioxygenase, domain 1"/>
    <property type="match status" value="1"/>
</dbReference>
<dbReference type="Gene3D" id="1.10.1270.20">
    <property type="entry name" value="tRNA(m1g37)methyltransferase, domain 2"/>
    <property type="match status" value="1"/>
</dbReference>
<dbReference type="HAMAP" id="MF_00605">
    <property type="entry name" value="TrmD"/>
    <property type="match status" value="1"/>
</dbReference>
<dbReference type="InterPro" id="IPR029028">
    <property type="entry name" value="Alpha/beta_knot_MTases"/>
</dbReference>
<dbReference type="InterPro" id="IPR029068">
    <property type="entry name" value="Glyas_Bleomycin-R_OHBP_Dase"/>
</dbReference>
<dbReference type="InterPro" id="IPR023148">
    <property type="entry name" value="tRNA_m1G_MeTrfase_C_sf"/>
</dbReference>
<dbReference type="InterPro" id="IPR002649">
    <property type="entry name" value="tRNA_m1G_MeTrfase_TrmD"/>
</dbReference>
<dbReference type="InterPro" id="IPR029026">
    <property type="entry name" value="tRNA_m1G_MTases_N"/>
</dbReference>
<dbReference type="InterPro" id="IPR016009">
    <property type="entry name" value="tRNA_MeTrfase_TRMD/TRM10"/>
</dbReference>
<dbReference type="NCBIfam" id="NF000648">
    <property type="entry name" value="PRK00026.1"/>
    <property type="match status" value="1"/>
</dbReference>
<dbReference type="NCBIfam" id="TIGR00088">
    <property type="entry name" value="trmD"/>
    <property type="match status" value="1"/>
</dbReference>
<dbReference type="PANTHER" id="PTHR46417">
    <property type="entry name" value="TRNA (GUANINE-N(1)-)-METHYLTRANSFERASE"/>
    <property type="match status" value="1"/>
</dbReference>
<dbReference type="PANTHER" id="PTHR46417:SF1">
    <property type="entry name" value="TRNA (GUANINE-N(1)-)-METHYLTRANSFERASE"/>
    <property type="match status" value="1"/>
</dbReference>
<dbReference type="Pfam" id="PF01746">
    <property type="entry name" value="tRNA_m1G_MT"/>
    <property type="match status" value="1"/>
</dbReference>
<dbReference type="SUPFAM" id="SSF75217">
    <property type="entry name" value="alpha/beta knot"/>
    <property type="match status" value="1"/>
</dbReference>
<dbReference type="SUPFAM" id="SSF54593">
    <property type="entry name" value="Glyoxalase/Bleomycin resistance protein/Dihydroxybiphenyl dioxygenase"/>
    <property type="match status" value="1"/>
</dbReference>
<accession>Q3KMZ5</accession>